<evidence type="ECO:0000255" key="1">
    <source>
        <dbReference type="HAMAP-Rule" id="MF_01988"/>
    </source>
</evidence>
<dbReference type="EC" id="6.2.1.5" evidence="1"/>
<dbReference type="EMBL" id="AE000782">
    <property type="protein sequence ID" value="AAB89067.1"/>
    <property type="molecule type" value="Genomic_DNA"/>
</dbReference>
<dbReference type="PIR" id="A69523">
    <property type="entry name" value="A69523"/>
</dbReference>
<dbReference type="SMR" id="O28098"/>
<dbReference type="STRING" id="224325.AF_2185"/>
<dbReference type="PaxDb" id="224325-AF_2185"/>
<dbReference type="EnsemblBacteria" id="AAB89067">
    <property type="protein sequence ID" value="AAB89067"/>
    <property type="gene ID" value="AF_2185"/>
</dbReference>
<dbReference type="KEGG" id="afu:AF_2185"/>
<dbReference type="eggNOG" id="arCOG01339">
    <property type="taxonomic scope" value="Archaea"/>
</dbReference>
<dbReference type="HOGENOM" id="CLU_052104_0_0_2"/>
<dbReference type="OrthoDB" id="55711at2157"/>
<dbReference type="PhylomeDB" id="O28098"/>
<dbReference type="UniPathway" id="UPA00223">
    <property type="reaction ID" value="UER00999"/>
</dbReference>
<dbReference type="Proteomes" id="UP000002199">
    <property type="component" value="Chromosome"/>
</dbReference>
<dbReference type="GO" id="GO:0009361">
    <property type="term" value="C:succinate-CoA ligase complex (ADP-forming)"/>
    <property type="evidence" value="ECO:0007669"/>
    <property type="project" value="TreeGrafter"/>
</dbReference>
<dbReference type="GO" id="GO:0000166">
    <property type="term" value="F:nucleotide binding"/>
    <property type="evidence" value="ECO:0007669"/>
    <property type="project" value="UniProtKB-KW"/>
</dbReference>
<dbReference type="GO" id="GO:0004775">
    <property type="term" value="F:succinate-CoA ligase (ADP-forming) activity"/>
    <property type="evidence" value="ECO:0007669"/>
    <property type="project" value="UniProtKB-UniRule"/>
</dbReference>
<dbReference type="GO" id="GO:0004776">
    <property type="term" value="F:succinate-CoA ligase (GDP-forming) activity"/>
    <property type="evidence" value="ECO:0007669"/>
    <property type="project" value="TreeGrafter"/>
</dbReference>
<dbReference type="GO" id="GO:0006099">
    <property type="term" value="P:tricarboxylic acid cycle"/>
    <property type="evidence" value="ECO:0007669"/>
    <property type="project" value="UniProtKB-UniRule"/>
</dbReference>
<dbReference type="FunFam" id="3.40.50.261:FF:000006">
    <property type="entry name" value="Succinate--CoA ligase [ADP-forming] subunit alpha"/>
    <property type="match status" value="1"/>
</dbReference>
<dbReference type="FunFam" id="3.40.50.720:FF:000277">
    <property type="entry name" value="Succinate--CoA ligase [ADP-forming] subunit alpha"/>
    <property type="match status" value="1"/>
</dbReference>
<dbReference type="Gene3D" id="3.40.50.720">
    <property type="entry name" value="NAD(P)-binding Rossmann-like Domain"/>
    <property type="match status" value="1"/>
</dbReference>
<dbReference type="Gene3D" id="3.40.50.261">
    <property type="entry name" value="Succinyl-CoA synthetase domains"/>
    <property type="match status" value="1"/>
</dbReference>
<dbReference type="HAMAP" id="MF_01988">
    <property type="entry name" value="Succ_CoA_alpha"/>
    <property type="match status" value="1"/>
</dbReference>
<dbReference type="InterPro" id="IPR017440">
    <property type="entry name" value="Cit_synth/succinyl-CoA_lig_AS"/>
</dbReference>
<dbReference type="InterPro" id="IPR033847">
    <property type="entry name" value="Citrt_syn/SCS-alpha_CS"/>
</dbReference>
<dbReference type="InterPro" id="IPR003781">
    <property type="entry name" value="CoA-bd"/>
</dbReference>
<dbReference type="InterPro" id="IPR005810">
    <property type="entry name" value="CoA_lig_alpha"/>
</dbReference>
<dbReference type="InterPro" id="IPR036291">
    <property type="entry name" value="NAD(P)-bd_dom_sf"/>
</dbReference>
<dbReference type="InterPro" id="IPR005811">
    <property type="entry name" value="SUCC_ACL_C"/>
</dbReference>
<dbReference type="InterPro" id="IPR016102">
    <property type="entry name" value="Succinyl-CoA_synth-like"/>
</dbReference>
<dbReference type="NCBIfam" id="NF004230">
    <property type="entry name" value="PRK05678.1"/>
    <property type="match status" value="1"/>
</dbReference>
<dbReference type="NCBIfam" id="TIGR01019">
    <property type="entry name" value="sucCoAalpha"/>
    <property type="match status" value="1"/>
</dbReference>
<dbReference type="PANTHER" id="PTHR11117:SF2">
    <property type="entry name" value="SUCCINATE--COA LIGASE [ADP_GDP-FORMING] SUBUNIT ALPHA, MITOCHONDRIAL"/>
    <property type="match status" value="1"/>
</dbReference>
<dbReference type="PANTHER" id="PTHR11117">
    <property type="entry name" value="SUCCINYL-COA LIGASE SUBUNIT ALPHA"/>
    <property type="match status" value="1"/>
</dbReference>
<dbReference type="Pfam" id="PF02629">
    <property type="entry name" value="CoA_binding"/>
    <property type="match status" value="1"/>
</dbReference>
<dbReference type="Pfam" id="PF00549">
    <property type="entry name" value="Ligase_CoA"/>
    <property type="match status" value="1"/>
</dbReference>
<dbReference type="PIRSF" id="PIRSF001553">
    <property type="entry name" value="SucCS_alpha"/>
    <property type="match status" value="1"/>
</dbReference>
<dbReference type="PRINTS" id="PR01798">
    <property type="entry name" value="SCOASYNTHASE"/>
</dbReference>
<dbReference type="SMART" id="SM00881">
    <property type="entry name" value="CoA_binding"/>
    <property type="match status" value="1"/>
</dbReference>
<dbReference type="SUPFAM" id="SSF51735">
    <property type="entry name" value="NAD(P)-binding Rossmann-fold domains"/>
    <property type="match status" value="1"/>
</dbReference>
<dbReference type="SUPFAM" id="SSF52210">
    <property type="entry name" value="Succinyl-CoA synthetase domains"/>
    <property type="match status" value="1"/>
</dbReference>
<dbReference type="PROSITE" id="PS01216">
    <property type="entry name" value="SUCCINYL_COA_LIG_1"/>
    <property type="match status" value="1"/>
</dbReference>
<dbReference type="PROSITE" id="PS00399">
    <property type="entry name" value="SUCCINYL_COA_LIG_2"/>
    <property type="match status" value="1"/>
</dbReference>
<sequence length="287" mass="30038">MAIIVDERTKVVVQGITGYQGKFHTERMLNYGTKIVAGVTPGKGGTEVLGVPVYDSVKEAVREADANASVIFVPAPFAADAVMEAADAGIKVIVCITEGIPVHDELKMYWRVKEAGATLIGPNCPGIISPGKTHLGIMPVQIFKPGNVGIVSRSGTLTYQIAYNLTKLGLGQSTVVGIGGDRIIGTDFVEVLRLFEDDKETKAVVLVGEIGGRDEEVAAEFIREMSKPVVGYVAGLTAPPGKRMGHAGAIIEGGVGTAESKIKALEAAGARVGKTPMEVAELVAEIL</sequence>
<accession>O28098</accession>
<organism>
    <name type="scientific">Archaeoglobus fulgidus (strain ATCC 49558 / DSM 4304 / JCM 9628 / NBRC 100126 / VC-16)</name>
    <dbReference type="NCBI Taxonomy" id="224325"/>
    <lineage>
        <taxon>Archaea</taxon>
        <taxon>Methanobacteriati</taxon>
        <taxon>Methanobacteriota</taxon>
        <taxon>Archaeoglobi</taxon>
        <taxon>Archaeoglobales</taxon>
        <taxon>Archaeoglobaceae</taxon>
        <taxon>Archaeoglobus</taxon>
    </lineage>
</organism>
<proteinExistence type="inferred from homology"/>
<reference key="1">
    <citation type="journal article" date="1997" name="Nature">
        <title>The complete genome sequence of the hyperthermophilic, sulphate-reducing archaeon Archaeoglobus fulgidus.</title>
        <authorList>
            <person name="Klenk H.-P."/>
            <person name="Clayton R.A."/>
            <person name="Tomb J.-F."/>
            <person name="White O."/>
            <person name="Nelson K.E."/>
            <person name="Ketchum K.A."/>
            <person name="Dodson R.J."/>
            <person name="Gwinn M.L."/>
            <person name="Hickey E.K."/>
            <person name="Peterson J.D."/>
            <person name="Richardson D.L."/>
            <person name="Kerlavage A.R."/>
            <person name="Graham D.E."/>
            <person name="Kyrpides N.C."/>
            <person name="Fleischmann R.D."/>
            <person name="Quackenbush J."/>
            <person name="Lee N.H."/>
            <person name="Sutton G.G."/>
            <person name="Gill S.R."/>
            <person name="Kirkness E.F."/>
            <person name="Dougherty B.A."/>
            <person name="McKenney K."/>
            <person name="Adams M.D."/>
            <person name="Loftus B.J."/>
            <person name="Peterson S.N."/>
            <person name="Reich C.I."/>
            <person name="McNeil L.K."/>
            <person name="Badger J.H."/>
            <person name="Glodek A."/>
            <person name="Zhou L."/>
            <person name="Overbeek R."/>
            <person name="Gocayne J.D."/>
            <person name="Weidman J.F."/>
            <person name="McDonald L.A."/>
            <person name="Utterback T.R."/>
            <person name="Cotton M.D."/>
            <person name="Spriggs T."/>
            <person name="Artiach P."/>
            <person name="Kaine B.P."/>
            <person name="Sykes S.M."/>
            <person name="Sadow P.W."/>
            <person name="D'Andrea K.P."/>
            <person name="Bowman C."/>
            <person name="Fujii C."/>
            <person name="Garland S.A."/>
            <person name="Mason T.M."/>
            <person name="Olsen G.J."/>
            <person name="Fraser C.M."/>
            <person name="Smith H.O."/>
            <person name="Woese C.R."/>
            <person name="Venter J.C."/>
        </authorList>
    </citation>
    <scope>NUCLEOTIDE SEQUENCE [LARGE SCALE GENOMIC DNA]</scope>
    <source>
        <strain>ATCC 49558 / DSM 4304 / JCM 9628 / NBRC 100126 / VC-16</strain>
    </source>
</reference>
<gene>
    <name evidence="1" type="primary">sucD2</name>
    <name type="ordered locus">AF_2185</name>
</gene>
<name>SUCD2_ARCFU</name>
<feature type="chain" id="PRO_0000102809" description="Succinate--CoA ligase [ADP-forming] subunit alpha 2">
    <location>
        <begin position="1"/>
        <end position="287"/>
    </location>
</feature>
<feature type="active site" description="Tele-phosphohistidine intermediate" evidence="1">
    <location>
        <position position="246"/>
    </location>
</feature>
<feature type="binding site" evidence="1">
    <location>
        <begin position="17"/>
        <end position="20"/>
    </location>
    <ligand>
        <name>CoA</name>
        <dbReference type="ChEBI" id="CHEBI:57287"/>
    </ligand>
</feature>
<feature type="binding site" evidence="1">
    <location>
        <position position="43"/>
    </location>
    <ligand>
        <name>CoA</name>
        <dbReference type="ChEBI" id="CHEBI:57287"/>
    </ligand>
</feature>
<feature type="binding site" evidence="1">
    <location>
        <begin position="96"/>
        <end position="98"/>
    </location>
    <ligand>
        <name>CoA</name>
        <dbReference type="ChEBI" id="CHEBI:57287"/>
    </ligand>
</feature>
<feature type="binding site" evidence="1">
    <location>
        <position position="159"/>
    </location>
    <ligand>
        <name>substrate</name>
        <note>ligand shared with subunit beta</note>
    </ligand>
</feature>
<protein>
    <recommendedName>
        <fullName evidence="1">Succinate--CoA ligase [ADP-forming] subunit alpha 2</fullName>
        <ecNumber evidence="1">6.2.1.5</ecNumber>
    </recommendedName>
    <alternativeName>
        <fullName evidence="1">Succinyl-CoA synthetase subunit alpha 2</fullName>
        <shortName evidence="1">SCS-alpha 2</shortName>
    </alternativeName>
</protein>
<comment type="function">
    <text evidence="1">Succinyl-CoA synthetase functions in the citric acid cycle (TCA), coupling the hydrolysis of succinyl-CoA to the synthesis of either ATP or GTP and thus represents the only step of substrate-level phosphorylation in the TCA. The alpha subunit of the enzyme binds the substrates coenzyme A and phosphate, while succinate binding and nucleotide specificity is provided by the beta subunit.</text>
</comment>
<comment type="catalytic activity">
    <reaction evidence="1">
        <text>succinate + ATP + CoA = succinyl-CoA + ADP + phosphate</text>
        <dbReference type="Rhea" id="RHEA:17661"/>
        <dbReference type="ChEBI" id="CHEBI:30031"/>
        <dbReference type="ChEBI" id="CHEBI:30616"/>
        <dbReference type="ChEBI" id="CHEBI:43474"/>
        <dbReference type="ChEBI" id="CHEBI:57287"/>
        <dbReference type="ChEBI" id="CHEBI:57292"/>
        <dbReference type="ChEBI" id="CHEBI:456216"/>
        <dbReference type="EC" id="6.2.1.5"/>
    </reaction>
    <physiologicalReaction direction="right-to-left" evidence="1">
        <dbReference type="Rhea" id="RHEA:17663"/>
    </physiologicalReaction>
</comment>
<comment type="catalytic activity">
    <reaction evidence="1">
        <text>GTP + succinate + CoA = succinyl-CoA + GDP + phosphate</text>
        <dbReference type="Rhea" id="RHEA:22120"/>
        <dbReference type="ChEBI" id="CHEBI:30031"/>
        <dbReference type="ChEBI" id="CHEBI:37565"/>
        <dbReference type="ChEBI" id="CHEBI:43474"/>
        <dbReference type="ChEBI" id="CHEBI:57287"/>
        <dbReference type="ChEBI" id="CHEBI:57292"/>
        <dbReference type="ChEBI" id="CHEBI:58189"/>
    </reaction>
    <physiologicalReaction direction="right-to-left" evidence="1">
        <dbReference type="Rhea" id="RHEA:22122"/>
    </physiologicalReaction>
</comment>
<comment type="pathway">
    <text evidence="1">Carbohydrate metabolism; tricarboxylic acid cycle; succinate from succinyl-CoA (ligase route): step 1/1.</text>
</comment>
<comment type="subunit">
    <text evidence="1">Heterotetramer of two alpha and two beta subunits.</text>
</comment>
<comment type="similarity">
    <text evidence="1">Belongs to the succinate/malate CoA ligase alpha subunit family.</text>
</comment>
<keyword id="KW-0436">Ligase</keyword>
<keyword id="KW-0547">Nucleotide-binding</keyword>
<keyword id="KW-1185">Reference proteome</keyword>
<keyword id="KW-0816">Tricarboxylic acid cycle</keyword>